<feature type="chain" id="PRO_0000150881" description="Olfactory receptor-like protein COR2">
    <location>
        <begin position="1"/>
        <end position="312"/>
    </location>
</feature>
<feature type="topological domain" description="Extracellular" evidence="1">
    <location>
        <begin position="1"/>
        <end position="26"/>
    </location>
</feature>
<feature type="transmembrane region" description="Helical; Name=1" evidence="1">
    <location>
        <begin position="27"/>
        <end position="49"/>
    </location>
</feature>
<feature type="topological domain" description="Cytoplasmic" evidence="1">
    <location>
        <begin position="50"/>
        <end position="57"/>
    </location>
</feature>
<feature type="transmembrane region" description="Helical; Name=2" evidence="1">
    <location>
        <begin position="58"/>
        <end position="79"/>
    </location>
</feature>
<feature type="topological domain" description="Extracellular" evidence="1">
    <location>
        <begin position="80"/>
        <end position="100"/>
    </location>
</feature>
<feature type="transmembrane region" description="Helical; Name=3" evidence="1">
    <location>
        <begin position="101"/>
        <end position="120"/>
    </location>
</feature>
<feature type="topological domain" description="Cytoplasmic" evidence="1">
    <location>
        <begin position="121"/>
        <end position="139"/>
    </location>
</feature>
<feature type="transmembrane region" description="Helical; Name=4" evidence="1">
    <location>
        <begin position="140"/>
        <end position="164"/>
    </location>
</feature>
<feature type="topological domain" description="Extracellular" evidence="1">
    <location>
        <begin position="165"/>
        <end position="205"/>
    </location>
</feature>
<feature type="transmembrane region" description="Helical; Name=5" evidence="1">
    <location>
        <begin position="206"/>
        <end position="226"/>
    </location>
</feature>
<feature type="topological domain" description="Cytoplasmic" evidence="1">
    <location>
        <begin position="227"/>
        <end position="239"/>
    </location>
</feature>
<feature type="transmembrane region" description="Helical; Name=6" evidence="1">
    <location>
        <begin position="240"/>
        <end position="260"/>
    </location>
</feature>
<feature type="topological domain" description="Extracellular" evidence="1">
    <location>
        <begin position="261"/>
        <end position="271"/>
    </location>
</feature>
<feature type="transmembrane region" description="Helical; Name=7" evidence="1">
    <location>
        <begin position="272"/>
        <end position="292"/>
    </location>
</feature>
<feature type="topological domain" description="Cytoplasmic" evidence="1">
    <location>
        <begin position="293"/>
        <end position="312"/>
    </location>
</feature>
<feature type="glycosylation site" description="N-linked (GlcNAc...) asparagine" evidence="1">
    <location>
        <position position="5"/>
    </location>
</feature>
<feature type="disulfide bond" evidence="2">
    <location>
        <begin position="97"/>
        <end position="179"/>
    </location>
</feature>
<proteinExistence type="inferred from homology"/>
<dbReference type="EMBL" id="Z79588">
    <property type="protein sequence ID" value="CAB01849.1"/>
    <property type="molecule type" value="Genomic_DNA"/>
</dbReference>
<dbReference type="SMR" id="P37068"/>
<dbReference type="FunCoup" id="P37068">
    <property type="interactions" value="6"/>
</dbReference>
<dbReference type="GlyCosmos" id="P37068">
    <property type="glycosylation" value="1 site, No reported glycans"/>
</dbReference>
<dbReference type="GlyGen" id="P37068">
    <property type="glycosylation" value="1 site"/>
</dbReference>
<dbReference type="PaxDb" id="9031-ENSGALP00000039616"/>
<dbReference type="VEuPathDB" id="HostDB:geneid_428830"/>
<dbReference type="eggNOG" id="ENOG502RF13">
    <property type="taxonomic scope" value="Eukaryota"/>
</dbReference>
<dbReference type="InParanoid" id="P37068"/>
<dbReference type="PhylomeDB" id="P37068"/>
<dbReference type="Proteomes" id="UP000000539">
    <property type="component" value="Unassembled WGS sequence"/>
</dbReference>
<dbReference type="GO" id="GO:0005886">
    <property type="term" value="C:plasma membrane"/>
    <property type="evidence" value="ECO:0007669"/>
    <property type="project" value="UniProtKB-SubCell"/>
</dbReference>
<dbReference type="GO" id="GO:0004930">
    <property type="term" value="F:G protein-coupled receptor activity"/>
    <property type="evidence" value="ECO:0007669"/>
    <property type="project" value="UniProtKB-KW"/>
</dbReference>
<dbReference type="GO" id="GO:0005549">
    <property type="term" value="F:odorant binding"/>
    <property type="evidence" value="ECO:0000318"/>
    <property type="project" value="GO_Central"/>
</dbReference>
<dbReference type="GO" id="GO:0004984">
    <property type="term" value="F:olfactory receptor activity"/>
    <property type="evidence" value="ECO:0000318"/>
    <property type="project" value="GO_Central"/>
</dbReference>
<dbReference type="FunFam" id="1.20.1070.10:FF:000003">
    <property type="entry name" value="Olfactory receptor"/>
    <property type="match status" value="1"/>
</dbReference>
<dbReference type="Gene3D" id="1.20.1070.10">
    <property type="entry name" value="Rhodopsin 7-helix transmembrane proteins"/>
    <property type="match status" value="1"/>
</dbReference>
<dbReference type="InterPro" id="IPR000276">
    <property type="entry name" value="GPCR_Rhodpsn"/>
</dbReference>
<dbReference type="InterPro" id="IPR017452">
    <property type="entry name" value="GPCR_Rhodpsn_7TM"/>
</dbReference>
<dbReference type="InterPro" id="IPR000725">
    <property type="entry name" value="Olfact_rcpt"/>
</dbReference>
<dbReference type="PANTHER" id="PTHR48018">
    <property type="entry name" value="OLFACTORY RECEPTOR"/>
    <property type="match status" value="1"/>
</dbReference>
<dbReference type="Pfam" id="PF13853">
    <property type="entry name" value="7tm_4"/>
    <property type="match status" value="1"/>
</dbReference>
<dbReference type="PRINTS" id="PR00237">
    <property type="entry name" value="GPCRRHODOPSN"/>
</dbReference>
<dbReference type="PRINTS" id="PR00245">
    <property type="entry name" value="OLFACTORYR"/>
</dbReference>
<dbReference type="SUPFAM" id="SSF81321">
    <property type="entry name" value="Family A G protein-coupled receptor-like"/>
    <property type="match status" value="1"/>
</dbReference>
<dbReference type="PROSITE" id="PS00237">
    <property type="entry name" value="G_PROTEIN_RECEP_F1_1"/>
    <property type="match status" value="1"/>
</dbReference>
<dbReference type="PROSITE" id="PS50262">
    <property type="entry name" value="G_PROTEIN_RECEP_F1_2"/>
    <property type="match status" value="1"/>
</dbReference>
<protein>
    <recommendedName>
        <fullName>Olfactory receptor-like protein COR2</fullName>
    </recommendedName>
</protein>
<sequence>MASGNCTTPTTFILSGLTDNPRLQMPLFMVFLVIYTTTLLTNLGLIALIGMDLHLQTPMYIFLQNLSFTDAAYSTVITPKMLATFLEERRTISYVGCILQYFSFVLLTTSEWLLLAVMAYDRYVAICKPLLYPSIMTKAVCWRLVKGLYSLAFLNSLVHTSGLLKLSFCSSNVVNHFFCDNRPLFQISSSSTTLNELLVIISGSLFVMSSIITILISYVFIILTVVMIRSKDGKYKAFSTCTSHLMAVSLFHGTVIFMYLRSVKLFSLDTDKIASLFYTVVIPMLNPLIYSWRNKEVKDALRRLTATSVWLH</sequence>
<name>OLF2_CHICK</name>
<organism>
    <name type="scientific">Gallus gallus</name>
    <name type="common">Chicken</name>
    <dbReference type="NCBI Taxonomy" id="9031"/>
    <lineage>
        <taxon>Eukaryota</taxon>
        <taxon>Metazoa</taxon>
        <taxon>Chordata</taxon>
        <taxon>Craniata</taxon>
        <taxon>Vertebrata</taxon>
        <taxon>Euteleostomi</taxon>
        <taxon>Archelosauria</taxon>
        <taxon>Archosauria</taxon>
        <taxon>Dinosauria</taxon>
        <taxon>Saurischia</taxon>
        <taxon>Theropoda</taxon>
        <taxon>Coelurosauria</taxon>
        <taxon>Aves</taxon>
        <taxon>Neognathae</taxon>
        <taxon>Galloanserae</taxon>
        <taxon>Galliformes</taxon>
        <taxon>Phasianidae</taxon>
        <taxon>Phasianinae</taxon>
        <taxon>Gallus</taxon>
    </lineage>
</organism>
<evidence type="ECO:0000255" key="1"/>
<evidence type="ECO:0000255" key="2">
    <source>
        <dbReference type="PROSITE-ProRule" id="PRU00521"/>
    </source>
</evidence>
<evidence type="ECO:0000305" key="3"/>
<accession>P37068</accession>
<reference key="1">
    <citation type="journal article" date="1996" name="Mech. Dev.">
        <title>Olfaction in birds: differential embryonic expression of nine putative odorant receptor genes in the avian olfactory system.</title>
        <authorList>
            <person name="Nef S."/>
            <person name="Allaman I."/>
            <person name="Fiumelli H."/>
            <person name="de Castro E."/>
            <person name="Nef P."/>
        </authorList>
    </citation>
    <scope>NUCLEOTIDE SEQUENCE [GENOMIC DNA]</scope>
    <source>
        <tissue>Olfactory epithelium</tissue>
    </source>
</reference>
<comment type="function">
    <text evidence="3">Odorant receptor.</text>
</comment>
<comment type="subcellular location">
    <subcellularLocation>
        <location>Cell membrane</location>
        <topology>Multi-pass membrane protein</topology>
    </subcellularLocation>
</comment>
<comment type="similarity">
    <text evidence="2">Belongs to the G-protein coupled receptor 1 family.</text>
</comment>
<keyword id="KW-1003">Cell membrane</keyword>
<keyword id="KW-1015">Disulfide bond</keyword>
<keyword id="KW-0297">G-protein coupled receptor</keyword>
<keyword id="KW-0325">Glycoprotein</keyword>
<keyword id="KW-0472">Membrane</keyword>
<keyword id="KW-0552">Olfaction</keyword>
<keyword id="KW-0675">Receptor</keyword>
<keyword id="KW-1185">Reference proteome</keyword>
<keyword id="KW-0716">Sensory transduction</keyword>
<keyword id="KW-0807">Transducer</keyword>
<keyword id="KW-0812">Transmembrane</keyword>
<keyword id="KW-1133">Transmembrane helix</keyword>
<gene>
    <name type="primary">COR2</name>
</gene>